<evidence type="ECO:0000250" key="1">
    <source>
        <dbReference type="UniProtKB" id="Q9Z0H6"/>
    </source>
</evidence>
<evidence type="ECO:0000255" key="2"/>
<evidence type="ECO:0000269" key="3">
    <source>
    </source>
</evidence>
<evidence type="ECO:0000269" key="4">
    <source>
    </source>
</evidence>
<evidence type="ECO:0000269" key="5">
    <source>
    </source>
</evidence>
<evidence type="ECO:0000303" key="6">
    <source>
    </source>
</evidence>
<evidence type="ECO:0000303" key="7">
    <source>
    </source>
</evidence>
<evidence type="ECO:0000305" key="8"/>
<organism>
    <name type="scientific">Homo sapiens</name>
    <name type="common">Human</name>
    <dbReference type="NCBI Taxonomy" id="9606"/>
    <lineage>
        <taxon>Eukaryota</taxon>
        <taxon>Metazoa</taxon>
        <taxon>Chordata</taxon>
        <taxon>Craniata</taxon>
        <taxon>Vertebrata</taxon>
        <taxon>Euteleostomi</taxon>
        <taxon>Mammalia</taxon>
        <taxon>Eutheria</taxon>
        <taxon>Euarchontoglires</taxon>
        <taxon>Primates</taxon>
        <taxon>Haplorrhini</taxon>
        <taxon>Catarrhini</taxon>
        <taxon>Hominidae</taxon>
        <taxon>Homo</taxon>
    </lineage>
</organism>
<comment type="function">
    <text evidence="1 3 5">May be involved in testis development (By similarity). May play a role in hematopoietic differentiation or inflammation (PubMed:12535658). Has immunomodulatory and antimicrobial functions against Francisella tularensis, a Gram-negative bacteria (PubMed:23922243).</text>
</comment>
<comment type="subcellular location">
    <subcellularLocation>
        <location evidence="3">Secreted</location>
    </subcellularLocation>
    <text evidence="3">May be targeted through the Golgi via the secretory pathway.</text>
</comment>
<comment type="tissue specificity">
    <text evidence="3 4">Expressed in heart, placenta, lung, liver, skeletal muscle and pancreas (PubMed:12535658). Not expressed in brain (PubMed:12535658). Expressed in epididymis, kidney, testis, spinal cord, and thymus with a strong expression in epididymis and kidney and a weak expression in the spinal cord and thymus (PubMed:20565543).</text>
</comment>
<comment type="induction">
    <text evidence="3">Up-regulated by bacterial lipopolysaccharides (LPS), in some cancer cells such as promyelocytic leukemia cells (HL-60) or myelomonocytic leukemia cells (U-937).</text>
</comment>
<comment type="similarity">
    <text evidence="8">Belongs to the cystatin family.</text>
</comment>
<reference key="1">
    <citation type="journal article" date="2003" name="Biochem. Biophys. Res. Commun.">
        <title>Molecular cloning and characterization of a novel cystatin-like molecule, CLM, from human bone marrow stromal cells.</title>
        <authorList>
            <person name="Sun H."/>
            <person name="Li N."/>
            <person name="Wang X."/>
            <person name="Liu S."/>
            <person name="Chen T."/>
            <person name="Zhang L."/>
            <person name="Wan T."/>
            <person name="Cao X."/>
        </authorList>
    </citation>
    <scope>NUCLEOTIDE SEQUENCE [MRNA]</scope>
    <scope>FUNCTION</scope>
    <scope>TISSUE SPECIFICITY</scope>
    <scope>SUBCELLULAR LOCATION</scope>
    <scope>INDUCTION BY LPS</scope>
    <scope>VARIANT PHE-48</scope>
    <source>
        <tissue>Bone marrow stroma</tissue>
    </source>
</reference>
<reference key="2">
    <citation type="journal article" date="2001" name="Nature">
        <title>The DNA sequence and comparative analysis of human chromosome 20.</title>
        <authorList>
            <person name="Deloukas P."/>
            <person name="Matthews L.H."/>
            <person name="Ashurst J.L."/>
            <person name="Burton J."/>
            <person name="Gilbert J.G.R."/>
            <person name="Jones M."/>
            <person name="Stavrides G."/>
            <person name="Almeida J.P."/>
            <person name="Babbage A.K."/>
            <person name="Bagguley C.L."/>
            <person name="Bailey J."/>
            <person name="Barlow K.F."/>
            <person name="Bates K.N."/>
            <person name="Beard L.M."/>
            <person name="Beare D.M."/>
            <person name="Beasley O.P."/>
            <person name="Bird C.P."/>
            <person name="Blakey S.E."/>
            <person name="Bridgeman A.M."/>
            <person name="Brown A.J."/>
            <person name="Buck D."/>
            <person name="Burrill W.D."/>
            <person name="Butler A.P."/>
            <person name="Carder C."/>
            <person name="Carter N.P."/>
            <person name="Chapman J.C."/>
            <person name="Clamp M."/>
            <person name="Clark G."/>
            <person name="Clark L.N."/>
            <person name="Clark S.Y."/>
            <person name="Clee C.M."/>
            <person name="Clegg S."/>
            <person name="Cobley V.E."/>
            <person name="Collier R.E."/>
            <person name="Connor R.E."/>
            <person name="Corby N.R."/>
            <person name="Coulson A."/>
            <person name="Coville G.J."/>
            <person name="Deadman R."/>
            <person name="Dhami P.D."/>
            <person name="Dunn M."/>
            <person name="Ellington A.G."/>
            <person name="Frankland J.A."/>
            <person name="Fraser A."/>
            <person name="French L."/>
            <person name="Garner P."/>
            <person name="Grafham D.V."/>
            <person name="Griffiths C."/>
            <person name="Griffiths M.N.D."/>
            <person name="Gwilliam R."/>
            <person name="Hall R.E."/>
            <person name="Hammond S."/>
            <person name="Harley J.L."/>
            <person name="Heath P.D."/>
            <person name="Ho S."/>
            <person name="Holden J.L."/>
            <person name="Howden P.J."/>
            <person name="Huckle E."/>
            <person name="Hunt A.R."/>
            <person name="Hunt S.E."/>
            <person name="Jekosch K."/>
            <person name="Johnson C.M."/>
            <person name="Johnson D."/>
            <person name="Kay M.P."/>
            <person name="Kimberley A.M."/>
            <person name="King A."/>
            <person name="Knights A."/>
            <person name="Laird G.K."/>
            <person name="Lawlor S."/>
            <person name="Lehvaeslaiho M.H."/>
            <person name="Leversha M.A."/>
            <person name="Lloyd C."/>
            <person name="Lloyd D.M."/>
            <person name="Lovell J.D."/>
            <person name="Marsh V.L."/>
            <person name="Martin S.L."/>
            <person name="McConnachie L.J."/>
            <person name="McLay K."/>
            <person name="McMurray A.A."/>
            <person name="Milne S.A."/>
            <person name="Mistry D."/>
            <person name="Moore M.J.F."/>
            <person name="Mullikin J.C."/>
            <person name="Nickerson T."/>
            <person name="Oliver K."/>
            <person name="Parker A."/>
            <person name="Patel R."/>
            <person name="Pearce T.A.V."/>
            <person name="Peck A.I."/>
            <person name="Phillimore B.J.C.T."/>
            <person name="Prathalingam S.R."/>
            <person name="Plumb R.W."/>
            <person name="Ramsay H."/>
            <person name="Rice C.M."/>
            <person name="Ross M.T."/>
            <person name="Scott C.E."/>
            <person name="Sehra H.K."/>
            <person name="Shownkeen R."/>
            <person name="Sims S."/>
            <person name="Skuce C.D."/>
            <person name="Smith M.L."/>
            <person name="Soderlund C."/>
            <person name="Steward C.A."/>
            <person name="Sulston J.E."/>
            <person name="Swann R.M."/>
            <person name="Sycamore N."/>
            <person name="Taylor R."/>
            <person name="Tee L."/>
            <person name="Thomas D.W."/>
            <person name="Thorpe A."/>
            <person name="Tracey A."/>
            <person name="Tromans A.C."/>
            <person name="Vaudin M."/>
            <person name="Wall M."/>
            <person name="Wallis J.M."/>
            <person name="Whitehead S.L."/>
            <person name="Whittaker P."/>
            <person name="Willey D.L."/>
            <person name="Williams L."/>
            <person name="Williams S.A."/>
            <person name="Wilming L."/>
            <person name="Wray P.W."/>
            <person name="Hubbard T."/>
            <person name="Durbin R.M."/>
            <person name="Bentley D.R."/>
            <person name="Beck S."/>
            <person name="Rogers J."/>
        </authorList>
    </citation>
    <scope>NUCLEOTIDE SEQUENCE [LARGE SCALE GENOMIC DNA]</scope>
</reference>
<reference key="3">
    <citation type="journal article" date="2004" name="Genome Res.">
        <title>The status, quality, and expansion of the NIH full-length cDNA project: the Mammalian Gene Collection (MGC).</title>
        <authorList>
            <consortium name="The MGC Project Team"/>
        </authorList>
    </citation>
    <scope>NUCLEOTIDE SEQUENCE [LARGE SCALE MRNA]</scope>
</reference>
<reference key="4">
    <citation type="journal article" date="2010" name="Evol. Dev.">
        <title>Evolution and human tissue expression of the Cres/Testatin subgroup genes, a reproductive tissue specific subgroup of the type 2 cystatins.</title>
        <authorList>
            <person name="Frygelius J."/>
            <person name="Arvestad L."/>
            <person name="Wedell A."/>
            <person name="Toehoenen V."/>
        </authorList>
    </citation>
    <scope>TISSUE SPECIFICITY</scope>
</reference>
<reference key="5">
    <citation type="journal article" date="2013" name="Mol. Med.">
        <title>Immunomodulatory and antibacterial effects of cystatin 9 against Francisella tularensis.</title>
        <authorList>
            <person name="Eaves-Pyles T."/>
            <person name="Patel J."/>
            <person name="Arigi E."/>
            <person name="Cong Y."/>
            <person name="Cao A."/>
            <person name="Garg N."/>
            <person name="Dhiman M."/>
            <person name="Pyles R.B."/>
            <person name="Arulanandam B."/>
            <person name="Miller A.L."/>
            <person name="Popov V.L."/>
            <person name="Soong L."/>
            <person name="Carlsen E.D."/>
            <person name="Coletta C."/>
            <person name="Szabo C."/>
            <person name="Almeida I.C."/>
        </authorList>
    </citation>
    <scope>FUNCTION</scope>
</reference>
<dbReference type="EMBL" id="AF494536">
    <property type="protein sequence ID" value="AAM18055.1"/>
    <property type="molecule type" value="mRNA"/>
</dbReference>
<dbReference type="EMBL" id="AL121894">
    <property type="status" value="NOT_ANNOTATED_CDS"/>
    <property type="molecule type" value="Genomic_DNA"/>
</dbReference>
<dbReference type="EMBL" id="BC137302">
    <property type="protein sequence ID" value="AAI37303.1"/>
    <property type="molecule type" value="mRNA"/>
</dbReference>
<dbReference type="EMBL" id="BC137303">
    <property type="protein sequence ID" value="AAI37304.1"/>
    <property type="molecule type" value="mRNA"/>
</dbReference>
<dbReference type="CCDS" id="CCDS33450.1"/>
<dbReference type="RefSeq" id="NP_001008693.2">
    <property type="nucleotide sequence ID" value="NM_001008693.3"/>
</dbReference>
<dbReference type="SMR" id="Q5W186"/>
<dbReference type="BioGRID" id="126160">
    <property type="interactions" value="89"/>
</dbReference>
<dbReference type="FunCoup" id="Q5W186">
    <property type="interactions" value="55"/>
</dbReference>
<dbReference type="IntAct" id="Q5W186">
    <property type="interactions" value="4"/>
</dbReference>
<dbReference type="STRING" id="9606.ENSP00000366170"/>
<dbReference type="MEROPS" id="I25.065"/>
<dbReference type="BioMuta" id="CST9"/>
<dbReference type="DMDM" id="74748036"/>
<dbReference type="MassIVE" id="Q5W186"/>
<dbReference type="PaxDb" id="9606-ENSP00000366170"/>
<dbReference type="Antibodypedia" id="24910">
    <property type="antibodies" value="136 antibodies from 20 providers"/>
</dbReference>
<dbReference type="DNASU" id="128822"/>
<dbReference type="Ensembl" id="ENST00000376971.4">
    <property type="protein sequence ID" value="ENSP00000366170.4"/>
    <property type="gene ID" value="ENSG00000173335.5"/>
</dbReference>
<dbReference type="GeneID" id="128822"/>
<dbReference type="KEGG" id="hsa:128822"/>
<dbReference type="MANE-Select" id="ENST00000376971.4">
    <property type="protein sequence ID" value="ENSP00000366170.4"/>
    <property type="RefSeq nucleotide sequence ID" value="NM_001008693.3"/>
    <property type="RefSeq protein sequence ID" value="NP_001008693.2"/>
</dbReference>
<dbReference type="UCSC" id="uc002wtl.4">
    <property type="organism name" value="human"/>
</dbReference>
<dbReference type="AGR" id="HGNC:13261"/>
<dbReference type="CTD" id="128822"/>
<dbReference type="DisGeNET" id="128822"/>
<dbReference type="GeneCards" id="CST9"/>
<dbReference type="HGNC" id="HGNC:13261">
    <property type="gene designation" value="CST9"/>
</dbReference>
<dbReference type="HPA" id="ENSG00000173335">
    <property type="expression patterns" value="Tissue enriched (breast)"/>
</dbReference>
<dbReference type="MIM" id="616543">
    <property type="type" value="gene"/>
</dbReference>
<dbReference type="neXtProt" id="NX_Q5W186"/>
<dbReference type="OpenTargets" id="ENSG00000173335"/>
<dbReference type="PharmGKB" id="PA134898267"/>
<dbReference type="VEuPathDB" id="HostDB:ENSG00000173335"/>
<dbReference type="eggNOG" id="ENOG502TAJ0">
    <property type="taxonomic scope" value="Eukaryota"/>
</dbReference>
<dbReference type="GeneTree" id="ENSGT00940000164098"/>
<dbReference type="HOGENOM" id="CLU_118168_3_0_1"/>
<dbReference type="InParanoid" id="Q5W186"/>
<dbReference type="OMA" id="HSCGCCM"/>
<dbReference type="OrthoDB" id="9534769at2759"/>
<dbReference type="PAN-GO" id="Q5W186">
    <property type="GO annotations" value="2 GO annotations based on evolutionary models"/>
</dbReference>
<dbReference type="PhylomeDB" id="Q5W186"/>
<dbReference type="PathwayCommons" id="Q5W186"/>
<dbReference type="SignaLink" id="Q5W186"/>
<dbReference type="BioGRID-ORCS" id="128822">
    <property type="hits" value="9 hits in 1138 CRISPR screens"/>
</dbReference>
<dbReference type="ChiTaRS" id="CST9">
    <property type="organism name" value="human"/>
</dbReference>
<dbReference type="GenomeRNAi" id="128822"/>
<dbReference type="Pharos" id="Q5W186">
    <property type="development level" value="Tbio"/>
</dbReference>
<dbReference type="PRO" id="PR:Q5W186"/>
<dbReference type="Proteomes" id="UP000005640">
    <property type="component" value="Chromosome 20"/>
</dbReference>
<dbReference type="RNAct" id="Q5W186">
    <property type="molecule type" value="protein"/>
</dbReference>
<dbReference type="Bgee" id="ENSG00000173335">
    <property type="expression patterns" value="Expressed in caput epididymis and 17 other cell types or tissues"/>
</dbReference>
<dbReference type="GO" id="GO:0005615">
    <property type="term" value="C:extracellular space"/>
    <property type="evidence" value="ECO:0000318"/>
    <property type="project" value="GO_Central"/>
</dbReference>
<dbReference type="GO" id="GO:0004869">
    <property type="term" value="F:cysteine-type endopeptidase inhibitor activity"/>
    <property type="evidence" value="ECO:0007669"/>
    <property type="project" value="UniProtKB-KW"/>
</dbReference>
<dbReference type="GO" id="GO:0019730">
    <property type="term" value="P:antimicrobial humoral response"/>
    <property type="evidence" value="ECO:0000314"/>
    <property type="project" value="UniProtKB"/>
</dbReference>
<dbReference type="FunFam" id="3.10.450.10:FF:000017">
    <property type="entry name" value="CST9 isoform 1"/>
    <property type="match status" value="1"/>
</dbReference>
<dbReference type="Gene3D" id="3.10.450.10">
    <property type="match status" value="1"/>
</dbReference>
<dbReference type="InterPro" id="IPR043250">
    <property type="entry name" value="CST9-like"/>
</dbReference>
<dbReference type="InterPro" id="IPR046350">
    <property type="entry name" value="Cystatin_sf"/>
</dbReference>
<dbReference type="PANTHER" id="PTHR46945:SF4">
    <property type="entry name" value="CYSTATIN-9"/>
    <property type="match status" value="1"/>
</dbReference>
<dbReference type="PANTHER" id="PTHR46945">
    <property type="entry name" value="CYSTATIN-9-LIKE"/>
    <property type="match status" value="1"/>
</dbReference>
<dbReference type="Pfam" id="PF00666">
    <property type="entry name" value="Cathelicidins"/>
    <property type="match status" value="1"/>
</dbReference>
<dbReference type="SUPFAM" id="SSF54403">
    <property type="entry name" value="Cystatin/monellin"/>
    <property type="match status" value="1"/>
</dbReference>
<gene>
    <name type="primary">CST9</name>
    <name evidence="6" type="synonym">CLM</name>
    <name evidence="7" type="synonym">CTES7A</name>
</gene>
<protein>
    <recommendedName>
        <fullName>Cystatin-9</fullName>
    </recommendedName>
    <alternativeName>
        <fullName>Cystatin-like molecule</fullName>
    </alternativeName>
</protein>
<proteinExistence type="evidence at transcript level"/>
<accession>Q5W186</accession>
<accession>B2RP76</accession>
<accession>Q8TD53</accession>
<name>CST9_HUMAN</name>
<sequence>MSSPQRRKAMPWALSLLLMGFQLLVTYAWCSEEEMGGNNKIVQDPMFLATVEFALNTFNVQSKEEHAYRLLRVLSSWREDSMDRKWRGKMVFSMNLQLRQTVCRKFEDDIDNCPFQESLELNNVRQGISFPQVHSCGCCMGCGVGTGAADKAIPRDKGK</sequence>
<feature type="signal peptide" evidence="2">
    <location>
        <begin position="1"/>
        <end position="28"/>
    </location>
</feature>
<feature type="chain" id="PRO_0000314693" description="Cystatin-9">
    <location>
        <begin position="29"/>
        <end position="159"/>
    </location>
</feature>
<feature type="sequence variant" id="VAR_038045" description="In dbSNP:rs2983640." evidence="3">
    <original>L</original>
    <variation>F</variation>
    <location>
        <position position="48"/>
    </location>
</feature>
<keyword id="KW-0929">Antimicrobial</keyword>
<keyword id="KW-0646">Protease inhibitor</keyword>
<keyword id="KW-1185">Reference proteome</keyword>
<keyword id="KW-0964">Secreted</keyword>
<keyword id="KW-0732">Signal</keyword>
<keyword id="KW-0789">Thiol protease inhibitor</keyword>